<reference key="1">
    <citation type="journal article" date="1999" name="J. Mol. Evol.">
        <title>The plastid genome of the cryptophyte alga, Guillardia theta: complete sequence and conserved synteny groups confirm its common ancestry with red algae.</title>
        <authorList>
            <person name="Douglas S.E."/>
            <person name="Penny S.L."/>
        </authorList>
    </citation>
    <scope>NUCLEOTIDE SEQUENCE [LARGE SCALE GENOMIC DNA]</scope>
</reference>
<feature type="propeptide" id="PRO_0000431220" evidence="1">
    <location>
        <begin position="1"/>
        <end position="14"/>
    </location>
</feature>
<feature type="chain" id="PRO_0000077515" description="Photosystem II CP43 reaction center protein" evidence="1">
    <location>
        <begin position="15"/>
        <end position="473"/>
    </location>
</feature>
<feature type="transmembrane region" description="Helical" evidence="1">
    <location>
        <begin position="69"/>
        <end position="93"/>
    </location>
</feature>
<feature type="transmembrane region" description="Helical" evidence="1">
    <location>
        <begin position="134"/>
        <end position="155"/>
    </location>
</feature>
<feature type="transmembrane region" description="Helical" evidence="1">
    <location>
        <begin position="178"/>
        <end position="200"/>
    </location>
</feature>
<feature type="transmembrane region" description="Helical" evidence="1">
    <location>
        <begin position="255"/>
        <end position="275"/>
    </location>
</feature>
<feature type="transmembrane region" description="Helical" evidence="1">
    <location>
        <begin position="291"/>
        <end position="312"/>
    </location>
</feature>
<feature type="transmembrane region" description="Helical" evidence="1">
    <location>
        <begin position="447"/>
        <end position="471"/>
    </location>
</feature>
<feature type="binding site" evidence="1">
    <location>
        <position position="367"/>
    </location>
    <ligand>
        <name>[CaMn4O5] cluster</name>
        <dbReference type="ChEBI" id="CHEBI:189552"/>
    </ligand>
</feature>
<feature type="modified residue" description="N-acetylthreonine" evidence="1">
    <location>
        <position position="15"/>
    </location>
</feature>
<feature type="modified residue" description="Phosphothreonine" evidence="1">
    <location>
        <position position="15"/>
    </location>
</feature>
<comment type="function">
    <text evidence="1">One of the components of the core complex of photosystem II (PSII). It binds chlorophyll and helps catalyze the primary light-induced photochemical processes of PSII. PSII is a light-driven water:plastoquinone oxidoreductase, using light energy to abstract electrons from H(2)O, generating O(2) and a proton gradient subsequently used for ATP formation.</text>
</comment>
<comment type="cofactor">
    <text evidence="1">Binds multiple chlorophylls and provides some of the ligands for the Ca-4Mn-5O cluster of the oxygen-evolving complex. It may also provide a ligand for a Cl- that is required for oxygen evolution. PSII binds additional chlorophylls, carotenoids and specific lipids.</text>
</comment>
<comment type="subunit">
    <text evidence="1">PSII is composed of 1 copy each of membrane proteins PsbA, PsbB, PsbC, PsbD, PsbE, PsbF, PsbH, PsbI, PsbJ, PsbK, PsbL, PsbM, PsbT, PsbX, PsbY, PsbZ, Psb30/Ycf12, at least 3 peripheral proteins of the oxygen-evolving complex and a large number of cofactors. It forms dimeric complexes.</text>
</comment>
<comment type="subcellular location">
    <subcellularLocation>
        <location evidence="1">Plastid</location>
        <location evidence="1">Chloroplast thylakoid membrane</location>
        <topology evidence="1">Multi-pass membrane protein</topology>
    </subcellularLocation>
</comment>
<comment type="similarity">
    <text evidence="1">Belongs to the PsbB/PsbC family. PsbC subfamily.</text>
</comment>
<comment type="sequence caution" evidence="2">
    <conflict type="erroneous initiation">
        <sequence resource="EMBL-CDS" id="AAC35611"/>
    </conflict>
    <text>Extended N-terminus.</text>
</comment>
<name>PSBC_GUITH</name>
<proteinExistence type="inferred from homology"/>
<organism>
    <name type="scientific">Guillardia theta</name>
    <name type="common">Cryptophyte</name>
    <name type="synonym">Cryptomonas phi</name>
    <dbReference type="NCBI Taxonomy" id="55529"/>
    <lineage>
        <taxon>Eukaryota</taxon>
        <taxon>Cryptophyceae</taxon>
        <taxon>Pyrenomonadales</taxon>
        <taxon>Geminigeraceae</taxon>
        <taxon>Guillardia</taxon>
    </lineage>
</organism>
<dbReference type="EMBL" id="AF041468">
    <property type="protein sequence ID" value="AAC35611.1"/>
    <property type="status" value="ALT_INIT"/>
    <property type="molecule type" value="Genomic_DNA"/>
</dbReference>
<dbReference type="RefSeq" id="NP_050677.2">
    <property type="nucleotide sequence ID" value="NC_000926.1"/>
</dbReference>
<dbReference type="SMR" id="O78426"/>
<dbReference type="GeneID" id="856963"/>
<dbReference type="HOGENOM" id="CLU_028310_1_1_1"/>
<dbReference type="GO" id="GO:0009535">
    <property type="term" value="C:chloroplast thylakoid membrane"/>
    <property type="evidence" value="ECO:0007669"/>
    <property type="project" value="UniProtKB-SubCell"/>
</dbReference>
<dbReference type="GO" id="GO:0009523">
    <property type="term" value="C:photosystem II"/>
    <property type="evidence" value="ECO:0007669"/>
    <property type="project" value="UniProtKB-KW"/>
</dbReference>
<dbReference type="GO" id="GO:0016168">
    <property type="term" value="F:chlorophyll binding"/>
    <property type="evidence" value="ECO:0007669"/>
    <property type="project" value="UniProtKB-UniRule"/>
</dbReference>
<dbReference type="GO" id="GO:0045156">
    <property type="term" value="F:electron transporter, transferring electrons within the cyclic electron transport pathway of photosynthesis activity"/>
    <property type="evidence" value="ECO:0007669"/>
    <property type="project" value="InterPro"/>
</dbReference>
<dbReference type="GO" id="GO:0046872">
    <property type="term" value="F:metal ion binding"/>
    <property type="evidence" value="ECO:0007669"/>
    <property type="project" value="UniProtKB-KW"/>
</dbReference>
<dbReference type="GO" id="GO:0009772">
    <property type="term" value="P:photosynthetic electron transport in photosystem II"/>
    <property type="evidence" value="ECO:0007669"/>
    <property type="project" value="InterPro"/>
</dbReference>
<dbReference type="FunFam" id="1.10.10.670:FF:000001">
    <property type="entry name" value="Photosystem II CP43 reaction center protein"/>
    <property type="match status" value="1"/>
</dbReference>
<dbReference type="Gene3D" id="1.10.10.670">
    <property type="entry name" value="photosystem ii from thermosynechococcus elongatus"/>
    <property type="match status" value="1"/>
</dbReference>
<dbReference type="HAMAP" id="MF_01496">
    <property type="entry name" value="PSII_PsbC_CP43"/>
    <property type="match status" value="1"/>
</dbReference>
<dbReference type="InterPro" id="IPR000932">
    <property type="entry name" value="PS_antenna-like"/>
</dbReference>
<dbReference type="InterPro" id="IPR036001">
    <property type="entry name" value="PS_II_antenna-like_sf"/>
</dbReference>
<dbReference type="InterPro" id="IPR005869">
    <property type="entry name" value="PSII_PsbC"/>
</dbReference>
<dbReference type="InterPro" id="IPR044900">
    <property type="entry name" value="PSII_PsbC_sf"/>
</dbReference>
<dbReference type="NCBIfam" id="TIGR01153">
    <property type="entry name" value="psbC"/>
    <property type="match status" value="1"/>
</dbReference>
<dbReference type="Pfam" id="PF00421">
    <property type="entry name" value="PSII"/>
    <property type="match status" value="1"/>
</dbReference>
<dbReference type="SUPFAM" id="SSF161077">
    <property type="entry name" value="Photosystem II antenna protein-like"/>
    <property type="match status" value="1"/>
</dbReference>
<keyword id="KW-0007">Acetylation</keyword>
<keyword id="KW-0148">Chlorophyll</keyword>
<keyword id="KW-0150">Chloroplast</keyword>
<keyword id="KW-0157">Chromophore</keyword>
<keyword id="KW-0464">Manganese</keyword>
<keyword id="KW-0472">Membrane</keyword>
<keyword id="KW-0479">Metal-binding</keyword>
<keyword id="KW-0597">Phosphoprotein</keyword>
<keyword id="KW-0602">Photosynthesis</keyword>
<keyword id="KW-0604">Photosystem II</keyword>
<keyword id="KW-0934">Plastid</keyword>
<keyword id="KW-0793">Thylakoid</keyword>
<keyword id="KW-0812">Transmembrane</keyword>
<keyword id="KW-1133">Transmembrane helix</keyword>
<accession>O78426</accession>
<sequence length="473" mass="52010">MKTLYSLRRFYHVETPFNSNVGIAGRDIESTGFAWWSGNSRLINVSGKLLGAHVAHAGLMVFWCGAMTLFEVAHYIPEKPLYEQGLILLPHLATLGWGVGPGGEIIDVYPYFVVGVLHLISSAVLGFGGVYHSLIGPDTLEESFPAFGYDWRDKNKITTILGIHLVILGFGALLLVIKAIYVGGLYDTWAPGGGDVRIIDNPTLNPAVIFGYVLKSPWGGDGWIVSVNNMEDVVGGHIWIGFTCIAGGFWHILTKPFAWARRAYVWSGEAYLSYSLVAVSLMAFIASQYAWYNNTVYPSEFYGPTGPEASQSQAFTFLVRDQRLGASVSSAQGPTGLGKYLMRSPSGEIILGGETQRFWDLRAPWIEPLRGPNGLDLNKIKNDIQPWQERRAAEYMTHAPLGSLNSVGGVATEINSVNYVSPRSWLTTSHFFLGFAFYIGHLWHAGRARAAAAGFEKGINRENEPVLTLRPID</sequence>
<geneLocation type="chloroplast"/>
<gene>
    <name evidence="1" type="primary">psbC</name>
</gene>
<protein>
    <recommendedName>
        <fullName evidence="1">Photosystem II CP43 reaction center protein</fullName>
    </recommendedName>
    <alternativeName>
        <fullName evidence="1">PSII 43 kDa protein</fullName>
    </alternativeName>
    <alternativeName>
        <fullName evidence="1">Protein CP-43</fullName>
    </alternativeName>
</protein>
<evidence type="ECO:0000255" key="1">
    <source>
        <dbReference type="HAMAP-Rule" id="MF_01496"/>
    </source>
</evidence>
<evidence type="ECO:0000305" key="2"/>